<keyword id="KW-0903">Direct protein sequencing</keyword>
<keyword id="KW-1015">Disulfide bond</keyword>
<keyword id="KW-0646">Protease inhibitor</keyword>
<keyword id="KW-0873">Pyrrolidone carboxylic acid</keyword>
<keyword id="KW-0722">Serine protease inhibitor</keyword>
<protein>
    <recommendedName>
        <fullName>Chymotrypsin inhibitor ECI</fullName>
    </recommendedName>
</protein>
<sequence length="179" mass="19851">QPLVDLEGNLVENGGTYYLLPHIWALGGGIEAARTGKETCPLTVVQSPFEVSNGEPIRIASQFLSTFIPDGSPYAIGFANPPSCAASPWWTVVETSEGLAVKLLEHKTPEEDDTKFKFQKVSSPNRYVYNLSYCQREDDDLKCDQYIGIRRDAKGYRRLVVTNDNPLELVLVKANSPSQ</sequence>
<evidence type="ECO:0000250" key="1"/>
<evidence type="ECO:0000269" key="2">
    <source>
    </source>
</evidence>
<evidence type="ECO:0000305" key="3"/>
<reference key="1">
    <citation type="journal article" date="1993" name="Biosci. Biotechnol. Biochem.">
        <title>Amino acid sequence of chymotrypsin inhibitor ECI from the seeds of Erythrina variegata (Linn.) var. Orientalis.</title>
        <authorList>
            <person name="Kimura M."/>
            <person name="Kouzuma Y."/>
            <person name="Yamasaki N."/>
        </authorList>
    </citation>
    <scope>PROTEIN SEQUENCE</scope>
    <scope>PYROGLUTAMATE FORMATION AT GLN-1</scope>
    <source>
        <strain>Var. Orientalis</strain>
        <tissue>Seed</tissue>
    </source>
</reference>
<feature type="chain" id="PRO_0000083291" description="Chymotrypsin inhibitor ECI">
    <location>
        <begin position="1"/>
        <end position="179"/>
    </location>
</feature>
<feature type="site" description="Reactive bond for chymotrypsin">
    <location>
        <begin position="64"/>
        <end position="65"/>
    </location>
</feature>
<feature type="modified residue" description="Pyrrolidone carboxylic acid" evidence="2">
    <location>
        <position position="1"/>
    </location>
</feature>
<feature type="disulfide bond" evidence="1">
    <location>
        <begin position="40"/>
        <end position="84"/>
    </location>
</feature>
<feature type="disulfide bond" evidence="1">
    <location>
        <begin position="134"/>
        <end position="143"/>
    </location>
</feature>
<comment type="function">
    <text>Inhibition of chymotrypsin.</text>
</comment>
<comment type="similarity">
    <text evidence="3">Belongs to the protease inhibitor I3 (leguminous Kunitz-type inhibitor) family.</text>
</comment>
<proteinExistence type="evidence at protein level"/>
<name>IECI_ERYVA</name>
<dbReference type="PIR" id="JC1487">
    <property type="entry name" value="JC1487"/>
</dbReference>
<dbReference type="SMR" id="P34952"/>
<dbReference type="MEROPS" id="I03.005"/>
<dbReference type="GO" id="GO:0004867">
    <property type="term" value="F:serine-type endopeptidase inhibitor activity"/>
    <property type="evidence" value="ECO:0007669"/>
    <property type="project" value="UniProtKB-KW"/>
</dbReference>
<dbReference type="CDD" id="cd23362">
    <property type="entry name" value="beta-trefoil_STI_WCI3-like"/>
    <property type="match status" value="1"/>
</dbReference>
<dbReference type="Gene3D" id="2.80.10.50">
    <property type="match status" value="1"/>
</dbReference>
<dbReference type="InterPro" id="IPR011065">
    <property type="entry name" value="Kunitz_inhibitor_STI-like_sf"/>
</dbReference>
<dbReference type="InterPro" id="IPR002160">
    <property type="entry name" value="Prot_inh_Kunz-lg"/>
</dbReference>
<dbReference type="PANTHER" id="PTHR33107">
    <property type="entry name" value="KUNITZ TRYPSIN INHIBITOR 2"/>
    <property type="match status" value="1"/>
</dbReference>
<dbReference type="PANTHER" id="PTHR33107:SF81">
    <property type="entry name" value="TRYPSIN INHIBITOR A"/>
    <property type="match status" value="1"/>
</dbReference>
<dbReference type="Pfam" id="PF00197">
    <property type="entry name" value="Kunitz_legume"/>
    <property type="match status" value="1"/>
</dbReference>
<dbReference type="PRINTS" id="PR00291">
    <property type="entry name" value="KUNITZINHBTR"/>
</dbReference>
<dbReference type="SMART" id="SM00452">
    <property type="entry name" value="STI"/>
    <property type="match status" value="1"/>
</dbReference>
<dbReference type="SUPFAM" id="SSF50386">
    <property type="entry name" value="STI-like"/>
    <property type="match status" value="1"/>
</dbReference>
<dbReference type="PROSITE" id="PS00283">
    <property type="entry name" value="SOYBEAN_KUNITZ"/>
    <property type="match status" value="1"/>
</dbReference>
<organism>
    <name type="scientific">Erythrina variegata</name>
    <name type="common">Indian coral tree</name>
    <name type="synonym">Erythrina indica</name>
    <dbReference type="NCBI Taxonomy" id="3845"/>
    <lineage>
        <taxon>Eukaryota</taxon>
        <taxon>Viridiplantae</taxon>
        <taxon>Streptophyta</taxon>
        <taxon>Embryophyta</taxon>
        <taxon>Tracheophyta</taxon>
        <taxon>Spermatophyta</taxon>
        <taxon>Magnoliopsida</taxon>
        <taxon>eudicotyledons</taxon>
        <taxon>Gunneridae</taxon>
        <taxon>Pentapetalae</taxon>
        <taxon>rosids</taxon>
        <taxon>fabids</taxon>
        <taxon>Fabales</taxon>
        <taxon>Fabaceae</taxon>
        <taxon>Papilionoideae</taxon>
        <taxon>50 kb inversion clade</taxon>
        <taxon>NPAAA clade</taxon>
        <taxon>indigoferoid/millettioid clade</taxon>
        <taxon>Phaseoleae</taxon>
        <taxon>Erythrina</taxon>
    </lineage>
</organism>
<accession>P34952</accession>